<organism>
    <name type="scientific">Pseudomonas aeruginosa (strain ATCC 15692 / DSM 22644 / CIP 104116 / JCM 14847 / LMG 12228 / 1C / PRS 101 / PAO1)</name>
    <dbReference type="NCBI Taxonomy" id="208964"/>
    <lineage>
        <taxon>Bacteria</taxon>
        <taxon>Pseudomonadati</taxon>
        <taxon>Pseudomonadota</taxon>
        <taxon>Gammaproteobacteria</taxon>
        <taxon>Pseudomonadales</taxon>
        <taxon>Pseudomonadaceae</taxon>
        <taxon>Pseudomonas</taxon>
    </lineage>
</organism>
<name>NOSD_PSEAE</name>
<protein>
    <recommendedName>
        <fullName evidence="1">Probable ABC transporter binding protein NosD</fullName>
    </recommendedName>
</protein>
<proteinExistence type="inferred from homology"/>
<reference key="1">
    <citation type="journal article" date="2000" name="Nature">
        <title>Complete genome sequence of Pseudomonas aeruginosa PAO1, an opportunistic pathogen.</title>
        <authorList>
            <person name="Stover C.K."/>
            <person name="Pham X.-Q.T."/>
            <person name="Erwin A.L."/>
            <person name="Mizoguchi S.D."/>
            <person name="Warrener P."/>
            <person name="Hickey M.J."/>
            <person name="Brinkman F.S.L."/>
            <person name="Hufnagle W.O."/>
            <person name="Kowalik D.J."/>
            <person name="Lagrou M."/>
            <person name="Garber R.L."/>
            <person name="Goltry L."/>
            <person name="Tolentino E."/>
            <person name="Westbrock-Wadman S."/>
            <person name="Yuan Y."/>
            <person name="Brody L.L."/>
            <person name="Coulter S.N."/>
            <person name="Folger K.R."/>
            <person name="Kas A."/>
            <person name="Larbig K."/>
            <person name="Lim R.M."/>
            <person name="Smith K.A."/>
            <person name="Spencer D.H."/>
            <person name="Wong G.K.-S."/>
            <person name="Wu Z."/>
            <person name="Paulsen I.T."/>
            <person name="Reizer J."/>
            <person name="Saier M.H. Jr."/>
            <person name="Hancock R.E.W."/>
            <person name="Lory S."/>
            <person name="Olson M.V."/>
        </authorList>
    </citation>
    <scope>NUCLEOTIDE SEQUENCE [LARGE SCALE GENOMIC DNA]</scope>
    <source>
        <strain>ATCC 15692 / DSM 22644 / CIP 104116 / JCM 14847 / LMG 12228 / 1C / PRS 101 / PAO1</strain>
    </source>
</reference>
<feature type="signal peptide" evidence="2">
    <location>
        <begin position="1"/>
        <end position="29"/>
    </location>
</feature>
<feature type="chain" id="PRO_0000031833" description="Probable ABC transporter binding protein NosD">
    <location>
        <begin position="30"/>
        <end position="428"/>
    </location>
</feature>
<feature type="repeat" description="PbH1 1" evidence="2">
    <location>
        <begin position="85"/>
        <end position="113"/>
    </location>
</feature>
<feature type="repeat" description="PbH1 2" evidence="2">
    <location>
        <begin position="115"/>
        <end position="136"/>
    </location>
</feature>
<feature type="repeat" description="PbH1 3" evidence="2">
    <location>
        <begin position="137"/>
        <end position="166"/>
    </location>
</feature>
<feature type="repeat" description="PbH1 4" evidence="2">
    <location>
        <begin position="167"/>
        <end position="188"/>
    </location>
</feature>
<feature type="repeat" description="PbH1 5" evidence="2">
    <location>
        <begin position="189"/>
        <end position="210"/>
    </location>
</feature>
<feature type="repeat" description="PbH1 6" evidence="2">
    <location>
        <begin position="211"/>
        <end position="232"/>
    </location>
</feature>
<feature type="repeat" description="PbH1 7" evidence="2">
    <location>
        <begin position="233"/>
        <end position="255"/>
    </location>
</feature>
<feature type="repeat" description="PbH1 8" evidence="2">
    <location>
        <begin position="292"/>
        <end position="313"/>
    </location>
</feature>
<feature type="repeat" description="PbH1 9" evidence="2">
    <location>
        <begin position="315"/>
        <end position="353"/>
    </location>
</feature>
<evidence type="ECO:0000250" key="1">
    <source>
        <dbReference type="UniProtKB" id="P19843"/>
    </source>
</evidence>
<evidence type="ECO:0000255" key="2"/>
<evidence type="ECO:0000305" key="3"/>
<gene>
    <name type="primary">nosD</name>
    <name type="ordered locus">PA3393</name>
</gene>
<dbReference type="EMBL" id="AE004091">
    <property type="protein sequence ID" value="AAG06781.1"/>
    <property type="molecule type" value="Genomic_DNA"/>
</dbReference>
<dbReference type="PIR" id="D83222">
    <property type="entry name" value="D83222"/>
</dbReference>
<dbReference type="RefSeq" id="NP_252083.1">
    <property type="nucleotide sequence ID" value="NC_002516.2"/>
</dbReference>
<dbReference type="RefSeq" id="WP_003113112.1">
    <property type="nucleotide sequence ID" value="NZ_QZGE01000017.1"/>
</dbReference>
<dbReference type="SMR" id="Q9HYL1"/>
<dbReference type="STRING" id="208964.PA3393"/>
<dbReference type="PaxDb" id="208964-PA3393"/>
<dbReference type="GeneID" id="880013"/>
<dbReference type="KEGG" id="pae:PA3393"/>
<dbReference type="PATRIC" id="fig|208964.12.peg.3552"/>
<dbReference type="PseudoCAP" id="PA3393"/>
<dbReference type="HOGENOM" id="CLU_041882_0_1_6"/>
<dbReference type="InParanoid" id="Q9HYL1"/>
<dbReference type="OrthoDB" id="9767990at2"/>
<dbReference type="PhylomeDB" id="Q9HYL1"/>
<dbReference type="BioCyc" id="PAER208964:G1FZ6-3459-MONOMER"/>
<dbReference type="Proteomes" id="UP000002438">
    <property type="component" value="Chromosome"/>
</dbReference>
<dbReference type="GO" id="GO:0042597">
    <property type="term" value="C:periplasmic space"/>
    <property type="evidence" value="ECO:0007669"/>
    <property type="project" value="UniProtKB-SubCell"/>
</dbReference>
<dbReference type="Gene3D" id="2.160.20.10">
    <property type="entry name" value="Single-stranded right-handed beta-helix, Pectin lyase-like"/>
    <property type="match status" value="2"/>
</dbReference>
<dbReference type="InterPro" id="IPR006633">
    <property type="entry name" value="Carb-bd_sugar_hydrolysis-dom"/>
</dbReference>
<dbReference type="InterPro" id="IPR026464">
    <property type="entry name" value="NosD_copper_fam"/>
</dbReference>
<dbReference type="InterPro" id="IPR007742">
    <property type="entry name" value="NosD_dom"/>
</dbReference>
<dbReference type="InterPro" id="IPR022441">
    <property type="entry name" value="Para_beta_helix_rpt-2"/>
</dbReference>
<dbReference type="InterPro" id="IPR006626">
    <property type="entry name" value="PbH1"/>
</dbReference>
<dbReference type="InterPro" id="IPR012334">
    <property type="entry name" value="Pectin_lyas_fold"/>
</dbReference>
<dbReference type="InterPro" id="IPR011050">
    <property type="entry name" value="Pectin_lyase_fold/virulence"/>
</dbReference>
<dbReference type="NCBIfam" id="TIGR04247">
    <property type="entry name" value="NosD_copper_fam"/>
    <property type="match status" value="1"/>
</dbReference>
<dbReference type="NCBIfam" id="TIGR03804">
    <property type="entry name" value="para_beta_helix"/>
    <property type="match status" value="1"/>
</dbReference>
<dbReference type="Pfam" id="PF05048">
    <property type="entry name" value="NosD"/>
    <property type="match status" value="1"/>
</dbReference>
<dbReference type="SMART" id="SM00722">
    <property type="entry name" value="CASH"/>
    <property type="match status" value="2"/>
</dbReference>
<dbReference type="SMART" id="SM00710">
    <property type="entry name" value="PbH1"/>
    <property type="match status" value="9"/>
</dbReference>
<dbReference type="SUPFAM" id="SSF51126">
    <property type="entry name" value="Pectin lyase-like"/>
    <property type="match status" value="1"/>
</dbReference>
<accession>Q9HYL1</accession>
<comment type="function">
    <text evidence="1">Required for the assembly of the copper chromophores of nitrous oxide reductase. Could be part of the ABC transporter complex NosDFY.</text>
</comment>
<comment type="subunit">
    <text evidence="1">The complex may be composed of an ATP-binding protein (NosF), a transmembrane protein (NosY) and a solute-binding protein (NosD).</text>
</comment>
<comment type="subcellular location">
    <subcellularLocation>
        <location evidence="1">Periplasm</location>
    </subcellularLocation>
</comment>
<comment type="similarity">
    <text evidence="3">Belongs to the NosD family.</text>
</comment>
<sequence length="428" mass="46805">MIHAARSLAGSRAGPLLALLLLGLATARAEPVDGLPLRADGDGRWSLAAGRYAGNFVIDRPLHLRCEAGAELDGGGHGSLLTLTSPGITVEGCRLRNWGRNLTELDAAIFVGKAASGAVIRGNDLRGAGFGVWLDATVGAQVLDNRIEGDESVRSQDRGNGIHLYAVKDALVRGNRVSHTRDGVYIDTSNDSSIEANRFEELRYGVHYMFTHNSRVTDNLTRRTRTGYALMQSRKLTVTGNRSIDDENYGILMNYITYSTLAGNRVEGVRSGSTGDAMISGAEGKALFIYNSLFNRIEGNSFADSALGIHLTAGSEDNRIAGNAFIGNRQQVKYVASREQEWSADGRGNYWSDYLGWDRDDDGLGDVAYEPNDNVDRLIWLYPQVRLLLNSPSIELLRWVQRAFPVVRSPGVRDSHPLMRMPAAEPRP</sequence>
<keyword id="KW-0574">Periplasm</keyword>
<keyword id="KW-1185">Reference proteome</keyword>
<keyword id="KW-0677">Repeat</keyword>
<keyword id="KW-0732">Signal</keyword>